<feature type="chain" id="PRO_0000323229" description="Small ribosomal subunit protein uS5">
    <location>
        <begin position="1"/>
        <end position="214"/>
    </location>
</feature>
<feature type="domain" description="S5 DRBM" evidence="1">
    <location>
        <begin position="54"/>
        <end position="117"/>
    </location>
</feature>
<dbReference type="EMBL" id="CP000682">
    <property type="protein sequence ID" value="ABP94288.1"/>
    <property type="molecule type" value="Genomic_DNA"/>
</dbReference>
<dbReference type="RefSeq" id="WP_011921257.1">
    <property type="nucleotide sequence ID" value="NZ_CP139956.1"/>
</dbReference>
<dbReference type="SMR" id="A4YCY6"/>
<dbReference type="STRING" id="399549.Msed_0111"/>
<dbReference type="KEGG" id="mse:Msed_0111"/>
<dbReference type="eggNOG" id="arCOG04087">
    <property type="taxonomic scope" value="Archaea"/>
</dbReference>
<dbReference type="HOGENOM" id="CLU_065898_0_1_2"/>
<dbReference type="Proteomes" id="UP000000242">
    <property type="component" value="Chromosome"/>
</dbReference>
<dbReference type="GO" id="GO:0022627">
    <property type="term" value="C:cytosolic small ribosomal subunit"/>
    <property type="evidence" value="ECO:0007669"/>
    <property type="project" value="TreeGrafter"/>
</dbReference>
<dbReference type="GO" id="GO:0019843">
    <property type="term" value="F:rRNA binding"/>
    <property type="evidence" value="ECO:0007669"/>
    <property type="project" value="UniProtKB-UniRule"/>
</dbReference>
<dbReference type="GO" id="GO:0003735">
    <property type="term" value="F:structural constituent of ribosome"/>
    <property type="evidence" value="ECO:0007669"/>
    <property type="project" value="InterPro"/>
</dbReference>
<dbReference type="GO" id="GO:0006412">
    <property type="term" value="P:translation"/>
    <property type="evidence" value="ECO:0007669"/>
    <property type="project" value="UniProtKB-UniRule"/>
</dbReference>
<dbReference type="FunFam" id="3.30.160.20:FF:000002">
    <property type="entry name" value="40S ribosomal protein S2"/>
    <property type="match status" value="1"/>
</dbReference>
<dbReference type="FunFam" id="3.30.230.10:FF:000004">
    <property type="entry name" value="40S ribosomal protein S2"/>
    <property type="match status" value="1"/>
</dbReference>
<dbReference type="Gene3D" id="3.30.160.20">
    <property type="match status" value="1"/>
</dbReference>
<dbReference type="Gene3D" id="3.30.230.10">
    <property type="match status" value="1"/>
</dbReference>
<dbReference type="HAMAP" id="MF_01307_A">
    <property type="entry name" value="Ribosomal_uS5_A"/>
    <property type="match status" value="1"/>
</dbReference>
<dbReference type="InterPro" id="IPR020568">
    <property type="entry name" value="Ribosomal_Su5_D2-typ_SF"/>
</dbReference>
<dbReference type="InterPro" id="IPR000851">
    <property type="entry name" value="Ribosomal_uS5"/>
</dbReference>
<dbReference type="InterPro" id="IPR047866">
    <property type="entry name" value="Ribosomal_uS5_arc"/>
</dbReference>
<dbReference type="InterPro" id="IPR005324">
    <property type="entry name" value="Ribosomal_uS5_C"/>
</dbReference>
<dbReference type="InterPro" id="IPR005711">
    <property type="entry name" value="Ribosomal_uS5_euk/arc"/>
</dbReference>
<dbReference type="InterPro" id="IPR013810">
    <property type="entry name" value="Ribosomal_uS5_N"/>
</dbReference>
<dbReference type="InterPro" id="IPR018192">
    <property type="entry name" value="Ribosomal_uS5_N_CS"/>
</dbReference>
<dbReference type="InterPro" id="IPR014721">
    <property type="entry name" value="Ribsml_uS5_D2-typ_fold_subgr"/>
</dbReference>
<dbReference type="NCBIfam" id="NF003125">
    <property type="entry name" value="PRK04044.1"/>
    <property type="match status" value="1"/>
</dbReference>
<dbReference type="NCBIfam" id="TIGR01020">
    <property type="entry name" value="uS5_euk_arch"/>
    <property type="match status" value="1"/>
</dbReference>
<dbReference type="PANTHER" id="PTHR13718:SF4">
    <property type="entry name" value="40S RIBOSOMAL PROTEIN S2"/>
    <property type="match status" value="1"/>
</dbReference>
<dbReference type="PANTHER" id="PTHR13718">
    <property type="entry name" value="RIBOSOMAL S SUBUNIT"/>
    <property type="match status" value="1"/>
</dbReference>
<dbReference type="Pfam" id="PF00333">
    <property type="entry name" value="Ribosomal_S5"/>
    <property type="match status" value="1"/>
</dbReference>
<dbReference type="Pfam" id="PF03719">
    <property type="entry name" value="Ribosomal_S5_C"/>
    <property type="match status" value="1"/>
</dbReference>
<dbReference type="SUPFAM" id="SSF54768">
    <property type="entry name" value="dsRNA-binding domain-like"/>
    <property type="match status" value="1"/>
</dbReference>
<dbReference type="SUPFAM" id="SSF54211">
    <property type="entry name" value="Ribosomal protein S5 domain 2-like"/>
    <property type="match status" value="1"/>
</dbReference>
<dbReference type="PROSITE" id="PS00585">
    <property type="entry name" value="RIBOSOMAL_S5"/>
    <property type="match status" value="1"/>
</dbReference>
<dbReference type="PROSITE" id="PS50881">
    <property type="entry name" value="S5_DSRBD"/>
    <property type="match status" value="1"/>
</dbReference>
<sequence length="214" mass="23746">MAEEVPVSNVEEWKPRTKIGQLVKEGKITSIKELYARNMSIAEPEIIDVLLPNMKYEVIDIGMVQKQTDAGELSRYKVLVVMGNYDGYVSIGVGKSKQLRVAIQKAIRDAKMHVIPVRRGCGSWECTCGESHSLPFLVSGKSGSAEVVLRPAPKGTGLVAGGVLKTLLTYAGIKDVWSFSRGETRTTDNFIMAGYRALYNTYKFVTPVDWARRR</sequence>
<accession>A4YCY6</accession>
<evidence type="ECO:0000255" key="1">
    <source>
        <dbReference type="HAMAP-Rule" id="MF_01307"/>
    </source>
</evidence>
<evidence type="ECO:0000305" key="2"/>
<proteinExistence type="inferred from homology"/>
<comment type="function">
    <text evidence="1">With S4 and S12 plays an important role in translational accuracy.</text>
</comment>
<comment type="subunit">
    <text evidence="1">Part of the 30S ribosomal subunit. Contacts protein S4.</text>
</comment>
<comment type="domain">
    <text>The N-terminal domain interacts with the head of the 30S subunit; the C-terminal domain interacts with the body and contacts protein S4. The interaction surface between S4 and S5 is involved in control of translational fidelity.</text>
</comment>
<comment type="similarity">
    <text evidence="1">Belongs to the universal ribosomal protein uS5 family.</text>
</comment>
<reference key="1">
    <citation type="journal article" date="2008" name="Appl. Environ. Microbiol.">
        <title>The genome sequence of the metal-mobilizing, extremely thermoacidophilic archaeon Metallosphaera sedula provides insights into bioleaching-associated metabolism.</title>
        <authorList>
            <person name="Auernik K.S."/>
            <person name="Maezato Y."/>
            <person name="Blum P.H."/>
            <person name="Kelly R.M."/>
        </authorList>
    </citation>
    <scope>NUCLEOTIDE SEQUENCE [LARGE SCALE GENOMIC DNA]</scope>
    <source>
        <strain>ATCC 51363 / DSM 5348 / JCM 9185 / NBRC 15509 / TH2</strain>
    </source>
</reference>
<organism>
    <name type="scientific">Metallosphaera sedula (strain ATCC 51363 / DSM 5348 / JCM 9185 / NBRC 15509 / TH2)</name>
    <dbReference type="NCBI Taxonomy" id="399549"/>
    <lineage>
        <taxon>Archaea</taxon>
        <taxon>Thermoproteota</taxon>
        <taxon>Thermoprotei</taxon>
        <taxon>Sulfolobales</taxon>
        <taxon>Sulfolobaceae</taxon>
        <taxon>Metallosphaera</taxon>
    </lineage>
</organism>
<name>RS5_METS5</name>
<protein>
    <recommendedName>
        <fullName evidence="1">Small ribosomal subunit protein uS5</fullName>
    </recommendedName>
    <alternativeName>
        <fullName evidence="2">30S ribosomal protein S5</fullName>
    </alternativeName>
</protein>
<keyword id="KW-1185">Reference proteome</keyword>
<keyword id="KW-0687">Ribonucleoprotein</keyword>
<keyword id="KW-0689">Ribosomal protein</keyword>
<keyword id="KW-0694">RNA-binding</keyword>
<keyword id="KW-0699">rRNA-binding</keyword>
<gene>
    <name evidence="1" type="primary">rps5</name>
    <name type="ordered locus">Msed_0111</name>
</gene>